<reference key="1">
    <citation type="journal article" date="1992" name="Antimicrob. Agents Chemother.">
        <title>Characterization of the chromosomal aac(6')-Ic gene from Serratia marcescens.</title>
        <authorList>
            <person name="Shaw K.J."/>
            <person name="Rather P.N."/>
            <person name="Sabatelli F.J."/>
            <person name="Mann P."/>
            <person name="Munayyer H."/>
            <person name="Mierzwa R."/>
            <person name="Petrikkos G.L."/>
            <person name="Hare R.S."/>
            <person name="Miller G.H."/>
            <person name="Bennett P."/>
        </authorList>
    </citation>
    <scope>NUCLEOTIDE SEQUENCE [GENOMIC DNA]</scope>
</reference>
<reference key="2">
    <citation type="unpublished observations" date="1995-06">
        <authorList>
            <person name="Rudd K.E."/>
        </authorList>
    </citation>
    <scope>IDENTIFICATION</scope>
    <scope>CONCEPTUAL TRANSLATION</scope>
</reference>
<sequence length="215" mass="24992">LQFLDLIQEGNIGLMKAVDKFEYRRGYKFSTYATWWIRQAITRSIADQARTIRIPVHMIETINKLNRISRQMLQEMGREPTPEELAERMLMPEDKIRKVLKIAKEPISMETPIGDDEDSHLGDFIEDTTLELPLDSATSESLRSATHDVLAGLTAREXKVLRMRFGIDMNTDHTLEEVGKQFDVTRERIRQIEAKALRKLRHPSRSEVLRSFLDD</sequence>
<comment type="function">
    <text evidence="1">Sigma factors are initiation factors that promote the attachment of RNA polymerase to specific initiation sites and are then released. This sigma factor is the primary sigma factor during exponential growth (By similarity).</text>
</comment>
<comment type="subunit">
    <text evidence="1">Interacts transiently with the RNA polymerase catalytic core.</text>
</comment>
<comment type="subcellular location">
    <subcellularLocation>
        <location evidence="2">Cytoplasm</location>
    </subcellularLocation>
</comment>
<comment type="similarity">
    <text evidence="2">Belongs to the sigma-70 factor family. RpoD/SigA subfamily.</text>
</comment>
<comment type="sequence caution" evidence="2">
    <conflict type="frameshift">
        <sequence resource="EMBL" id="M94066"/>
    </conflict>
</comment>
<dbReference type="EMBL" id="M94066">
    <property type="status" value="NOT_ANNOTATED_CDS"/>
    <property type="molecule type" value="Genomic_DNA"/>
</dbReference>
<dbReference type="STRING" id="273526.SMDB11_3532"/>
<dbReference type="GO" id="GO:0005737">
    <property type="term" value="C:cytoplasm"/>
    <property type="evidence" value="ECO:0007669"/>
    <property type="project" value="UniProtKB-SubCell"/>
</dbReference>
<dbReference type="GO" id="GO:0003677">
    <property type="term" value="F:DNA binding"/>
    <property type="evidence" value="ECO:0007669"/>
    <property type="project" value="UniProtKB-KW"/>
</dbReference>
<dbReference type="GO" id="GO:0016987">
    <property type="term" value="F:sigma factor activity"/>
    <property type="evidence" value="ECO:0007669"/>
    <property type="project" value="UniProtKB-KW"/>
</dbReference>
<dbReference type="GO" id="GO:0006352">
    <property type="term" value="P:DNA-templated transcription initiation"/>
    <property type="evidence" value="ECO:0007669"/>
    <property type="project" value="InterPro"/>
</dbReference>
<dbReference type="CDD" id="cd06171">
    <property type="entry name" value="Sigma70_r4"/>
    <property type="match status" value="1"/>
</dbReference>
<dbReference type="FunFam" id="1.10.10.10:FF:000002">
    <property type="entry name" value="RNA polymerase sigma factor SigA"/>
    <property type="match status" value="1"/>
</dbReference>
<dbReference type="FunFam" id="1.10.10.10:FF:000004">
    <property type="entry name" value="RNA polymerase sigma factor SigA"/>
    <property type="match status" value="1"/>
</dbReference>
<dbReference type="Gene3D" id="1.10.601.10">
    <property type="entry name" value="RNA Polymerase Primary Sigma Factor"/>
    <property type="match status" value="1"/>
</dbReference>
<dbReference type="Gene3D" id="1.10.10.10">
    <property type="entry name" value="Winged helix-like DNA-binding domain superfamily/Winged helix DNA-binding domain"/>
    <property type="match status" value="2"/>
</dbReference>
<dbReference type="InterPro" id="IPR014284">
    <property type="entry name" value="RNA_pol_sigma-70_dom"/>
</dbReference>
<dbReference type="InterPro" id="IPR000943">
    <property type="entry name" value="RNA_pol_sigma70"/>
</dbReference>
<dbReference type="InterPro" id="IPR007627">
    <property type="entry name" value="RNA_pol_sigma70_r2"/>
</dbReference>
<dbReference type="InterPro" id="IPR007624">
    <property type="entry name" value="RNA_pol_sigma70_r3"/>
</dbReference>
<dbReference type="InterPro" id="IPR007630">
    <property type="entry name" value="RNA_pol_sigma70_r4"/>
</dbReference>
<dbReference type="InterPro" id="IPR013325">
    <property type="entry name" value="RNA_pol_sigma_r2"/>
</dbReference>
<dbReference type="InterPro" id="IPR013324">
    <property type="entry name" value="RNA_pol_sigma_r3/r4-like"/>
</dbReference>
<dbReference type="InterPro" id="IPR012760">
    <property type="entry name" value="RNA_pol_sigma_RpoD_C"/>
</dbReference>
<dbReference type="InterPro" id="IPR050239">
    <property type="entry name" value="Sigma-70_RNA_pol_init_factors"/>
</dbReference>
<dbReference type="InterPro" id="IPR036388">
    <property type="entry name" value="WH-like_DNA-bd_sf"/>
</dbReference>
<dbReference type="NCBIfam" id="TIGR02393">
    <property type="entry name" value="RpoD_Cterm"/>
    <property type="match status" value="1"/>
</dbReference>
<dbReference type="NCBIfam" id="TIGR02937">
    <property type="entry name" value="sigma70-ECF"/>
    <property type="match status" value="1"/>
</dbReference>
<dbReference type="PANTHER" id="PTHR30603">
    <property type="entry name" value="RNA POLYMERASE SIGMA FACTOR RPO"/>
    <property type="match status" value="1"/>
</dbReference>
<dbReference type="PANTHER" id="PTHR30603:SF60">
    <property type="entry name" value="RNA POLYMERASE SIGMA FACTOR RPOD"/>
    <property type="match status" value="1"/>
</dbReference>
<dbReference type="Pfam" id="PF04542">
    <property type="entry name" value="Sigma70_r2"/>
    <property type="match status" value="1"/>
</dbReference>
<dbReference type="Pfam" id="PF04539">
    <property type="entry name" value="Sigma70_r3"/>
    <property type="match status" value="1"/>
</dbReference>
<dbReference type="Pfam" id="PF04545">
    <property type="entry name" value="Sigma70_r4"/>
    <property type="match status" value="1"/>
</dbReference>
<dbReference type="PRINTS" id="PR00046">
    <property type="entry name" value="SIGMA70FCT"/>
</dbReference>
<dbReference type="SUPFAM" id="SSF88946">
    <property type="entry name" value="Sigma2 domain of RNA polymerase sigma factors"/>
    <property type="match status" value="1"/>
</dbReference>
<dbReference type="SUPFAM" id="SSF88659">
    <property type="entry name" value="Sigma3 and sigma4 domains of RNA polymerase sigma factors"/>
    <property type="match status" value="2"/>
</dbReference>
<dbReference type="PROSITE" id="PS00715">
    <property type="entry name" value="SIGMA70_1"/>
    <property type="match status" value="1"/>
</dbReference>
<dbReference type="PROSITE" id="PS00716">
    <property type="entry name" value="SIGMA70_2"/>
    <property type="match status" value="1"/>
</dbReference>
<organism>
    <name type="scientific">Serratia marcescens</name>
    <dbReference type="NCBI Taxonomy" id="615"/>
    <lineage>
        <taxon>Bacteria</taxon>
        <taxon>Pseudomonadati</taxon>
        <taxon>Pseudomonadota</taxon>
        <taxon>Gammaproteobacteria</taxon>
        <taxon>Enterobacterales</taxon>
        <taxon>Yersiniaceae</taxon>
        <taxon>Serratia</taxon>
    </lineage>
</organism>
<name>RPOD_SERMA</name>
<evidence type="ECO:0000250" key="1"/>
<evidence type="ECO:0000305" key="2"/>
<keyword id="KW-0963">Cytoplasm</keyword>
<keyword id="KW-0238">DNA-binding</keyword>
<keyword id="KW-0731">Sigma factor</keyword>
<keyword id="KW-0804">Transcription</keyword>
<keyword id="KW-0805">Transcription regulation</keyword>
<feature type="chain" id="PRO_0000093922" description="RNA polymerase sigma factor RpoD">
    <location>
        <begin position="1" status="less than"/>
        <end position="215"/>
    </location>
</feature>
<feature type="DNA-binding region" description="H-T-H motif" evidence="1">
    <location>
        <begin position="175"/>
        <end position="194"/>
    </location>
</feature>
<feature type="region of interest" description="Sigma-70 factor domain-2" evidence="1">
    <location>
        <begin position="1" status="less than"/>
        <end position="51"/>
    </location>
</feature>
<feature type="region of interest" description="Sigma-70 factor domain-3" evidence="1">
    <location>
        <begin position="60"/>
        <end position="136"/>
    </location>
</feature>
<feature type="region of interest" description="Sigma-70 factor domain-4" evidence="1">
    <location>
        <begin position="149"/>
        <end position="202"/>
    </location>
</feature>
<feature type="short sequence motif" description="Interaction with polymerase core subunit RpoC">
    <location>
        <begin position="5"/>
        <end position="8"/>
    </location>
</feature>
<feature type="non-terminal residue">
    <location>
        <position position="1"/>
    </location>
</feature>
<proteinExistence type="inferred from homology"/>
<gene>
    <name type="primary">rpoD</name>
</gene>
<accession>P43344</accession>
<protein>
    <recommendedName>
        <fullName>RNA polymerase sigma factor RpoD</fullName>
    </recommendedName>
    <alternativeName>
        <fullName>Sigma-70</fullName>
    </alternativeName>
</protein>